<reference key="1">
    <citation type="journal article" date="2006" name="J. Biol. Chem.">
        <title>Evolution of the primate cathelicidin. Correlation between structural variations and antimicrobial activity.</title>
        <authorList>
            <person name="Zelezetsky I."/>
            <person name="Pontillo A."/>
            <person name="Puzzi L."/>
            <person name="Antcheva N."/>
            <person name="Segat L."/>
            <person name="Pacor S."/>
            <person name="Crovella S."/>
            <person name="Tossi A."/>
        </authorList>
    </citation>
    <scope>NUCLEOTIDE SEQUENCE [GENOMIC DNA]</scope>
</reference>
<sequence length="170" mass="19019">MNTQWDSPSLGRWSLVLLLLGLVMPLAIVAQVLSYQEAVLRAIDGINQRSSDANLYRLLDLDPRPTMDGDPDTPKPVSFTVKETVCPRTIQRSPEECDFREDGLVKWCVGTVTLNQAKDSFDISCDKDKRKVAQLGDVLQKAGEKIVRGLKNIGQRIKDFFGKLTPRTES</sequence>
<feature type="signal peptide" evidence="3">
    <location>
        <begin position="1"/>
        <end position="30"/>
    </location>
</feature>
<feature type="propeptide" id="PRO_0000251740" description="Cathelin-like domain (CLD)" evidence="1">
    <location>
        <begin position="31"/>
        <end position="131"/>
    </location>
</feature>
<feature type="peptide" id="PRO_0000251741" description="Antibacterial peptide FALL-39" evidence="1">
    <location>
        <begin position="132"/>
        <end position="170"/>
    </location>
</feature>
<feature type="peptide" id="PRO_0000251742" description="Antibacterial peptide LL-37" evidence="1">
    <location>
        <begin position="134"/>
        <end position="170"/>
    </location>
</feature>
<feature type="region of interest" description="Active core" evidence="1">
    <location>
        <begin position="150"/>
        <end position="162"/>
    </location>
</feature>
<feature type="disulfide bond" evidence="1">
    <location>
        <begin position="86"/>
        <end position="97"/>
    </location>
</feature>
<feature type="disulfide bond" evidence="1">
    <location>
        <begin position="108"/>
        <end position="125"/>
    </location>
</feature>
<organism>
    <name type="scientific">Ateles fusciceps</name>
    <name type="common">Brown-headed spider monkey</name>
    <name type="synonym">Ateles geoffroyi fusciceps</name>
    <dbReference type="NCBI Taxonomy" id="9508"/>
    <lineage>
        <taxon>Eukaryota</taxon>
        <taxon>Metazoa</taxon>
        <taxon>Chordata</taxon>
        <taxon>Craniata</taxon>
        <taxon>Vertebrata</taxon>
        <taxon>Euteleostomi</taxon>
        <taxon>Mammalia</taxon>
        <taxon>Eutheria</taxon>
        <taxon>Euarchontoglires</taxon>
        <taxon>Primates</taxon>
        <taxon>Haplorrhini</taxon>
        <taxon>Platyrrhini</taxon>
        <taxon>Atelidae</taxon>
        <taxon>Atelinae</taxon>
        <taxon>Ateles</taxon>
    </lineage>
</organism>
<protein>
    <recommendedName>
        <fullName evidence="1">Cathelicidin antimicrobial peptide</fullName>
    </recommendedName>
    <component>
        <recommendedName>
            <fullName evidence="1">Antibacterial peptide FALL-39</fullName>
        </recommendedName>
        <alternativeName>
            <fullName evidence="1">FALL-39 peptide antibiotic</fullName>
        </alternativeName>
    </component>
    <component>
        <recommendedName>
            <fullName evidence="1">Antibacterial peptide LL-37</fullName>
        </recommendedName>
    </component>
</protein>
<proteinExistence type="inferred from homology"/>
<evidence type="ECO:0000250" key="1">
    <source>
        <dbReference type="UniProtKB" id="P49913"/>
    </source>
</evidence>
<evidence type="ECO:0000250" key="2">
    <source>
        <dbReference type="UniProtKB" id="P54229"/>
    </source>
</evidence>
<evidence type="ECO:0000255" key="3"/>
<evidence type="ECO:0000305" key="4"/>
<name>CAMP_ATEFU</name>
<comment type="function">
    <text evidence="1">Antimicrobial protein that is an integral component of the innate immune system (By similarity). Binds to bacterial lipopolysaccharides (LPS) (By similarity). Acts via neutrophil N-formyl peptide receptors to enhance the release of CXCL2 (By similarity). Postsecretory processing generates multiple cathelicidin antimicrobial peptides with various lengths which act as a topical antimicrobial defense in sweat on skin (By similarity). The unprocessed precursor form, cathelicidin antimicrobial peptide, inhibits the growth of Gram-negative E.coli and E.aerogenes with efficiencies comparable to that of the mature peptide LL-37 (in vitro) (By similarity).</text>
</comment>
<comment type="function">
    <molecule>Antibacterial peptide LL-37</molecule>
    <text evidence="1">Antimicrobial peptide that is an integral component of the innate immune system (By similarity). Binds to bacterial lipopolysaccharides (LPS) (By similarity). Causes membrane permeabilization by forming transmembrane pores (in vitro) (By similarity). Causes lysis of E.coli (By similarity). Exhibits antimicrobial activity against Gram-negative bacteria such as P.aeruginosa, S.typhimurium, E.aerogenes, E.coli and P.syringae, Gram-positive bacteria such as L.monocytogenes, S.epidermidis, S.pyogenes and S.aureus, as well as vancomycin-resistant enterococci (in vitro) (By similarity). Exhibits antimicrobial activity against methicillin-resistant S.aureus, P.mirabilis, and C.albicans in low-salt media, but not in media containing 100 mM NaCl (in vitro) (By similarity). Forms chiral supramolecular assemblies with quinolone signal (PQS) molecules of P.aeruginosa, which may lead to interference of bacterial quorum signaling and perturbance of bacterial biofilm formation (By similarity). May form supramolecular fiber-like assemblies on bacterial membranes (By similarity). Induces cytokine and chemokine producation as well as TNF/TNFA and CSF2/GMCSF production in normal human keratinocytes (By similarity). Exhibits hemolytic activity against red blood cells (By similarity).</text>
</comment>
<comment type="function">
    <molecule>Antibacterial peptide FALL-39</molecule>
    <text evidence="1">Exhibits antimicrobial activity against E.coli and B.megaterium (in vitro).</text>
</comment>
<comment type="subunit">
    <molecule>Antibacterial peptide LL-37</molecule>
    <text evidence="1">Monomer, homodimer or homotrimer (in vitro) (By similarity). Oligomerizes as tetra- or hexamer in solution (in vitro) (By similarity).</text>
</comment>
<comment type="subcellular location">
    <subcellularLocation>
        <location evidence="2">Secreted</location>
    </subcellularLocation>
    <subcellularLocation>
        <location evidence="2">Vesicle</location>
    </subcellularLocation>
    <text evidence="2">Stored as pro-peptide in granules and phagolysosomes of neutrophils (By similarity). Secreted in sweat onto skin (By similarity).</text>
</comment>
<comment type="domain">
    <text evidence="2">The cathelin-like domain (CLD), which is the propeptide part, does not seem to exhibit auto-inhibitory function, as it does not inhibit the antibacterial activity of antibacterial peptide LL-37.</text>
</comment>
<comment type="domain">
    <molecule>Antibacterial peptide LL-37</molecule>
    <text evidence="2">Undergoes conformational change in the presence of lipid A, transitioning from a random coil to an alpha-helical structure.</text>
</comment>
<comment type="domain">
    <molecule>Antibacterial peptide LL-37</molecule>
    <text evidence="2">Residues 17-29 of LL-37 represent the active core of the antimicrobial peptide. Forms ribbon-like fibrils and exhibits antibacterial activity against Gram-positive M.luteus (By similarity). Also exhibits antibacterial activity against Gram-negative E.coli and P.fluorescens (By similarity).</text>
</comment>
<comment type="PTM">
    <text evidence="1">Proteolytically cleaved by proteinase PRTN3 into antibacterial peptide LL-37 (By similarity). Proteolytically cleaved by cathepsin CTSG and neutrophil elastase ELANE (By similarity).</text>
</comment>
<comment type="PTM">
    <molecule>Antibacterial peptide LL-37</molecule>
    <text evidence="1">Resistant to proteolytic degradation in solution, and when bound to both zwitterionic (mimicking mammalian membranes) and negatively charged membranes (mimicking bacterial membranes).</text>
</comment>
<comment type="PTM">
    <text evidence="1">After secretion onto the skin surface, the CAMP gene product is processed by a serine protease-dependent mechanism into multiple novel antimicrobial peptides distinct from and shorter than cathelicidin LL-37 (By similarity). These peptides show enhanced antimicrobial action, acquiring the ability to kill skin pathogens such as S.aureus, E.coli and C.albicans. These peptides have lost the ability to stimulate CXCL8/IL8 release from keratinocytes (By similarity). The peptides act synergistically, killing bacteria at lower concentrations when present together, and maintain activity at increased salt condition (By similarity).</text>
</comment>
<comment type="similarity">
    <text evidence="4">Belongs to the cathelicidin family.</text>
</comment>
<accession>Q1KLY7</accession>
<gene>
    <name evidence="1" type="primary">CAMP</name>
</gene>
<dbReference type="EMBL" id="DQ471355">
    <property type="protein sequence ID" value="ABE96619.1"/>
    <property type="molecule type" value="Genomic_DNA"/>
</dbReference>
<dbReference type="SMR" id="Q1KLY7"/>
<dbReference type="GO" id="GO:0005615">
    <property type="term" value="C:extracellular space"/>
    <property type="evidence" value="ECO:0007669"/>
    <property type="project" value="TreeGrafter"/>
</dbReference>
<dbReference type="GO" id="GO:0031982">
    <property type="term" value="C:vesicle"/>
    <property type="evidence" value="ECO:0007669"/>
    <property type="project" value="UniProtKB-SubCell"/>
</dbReference>
<dbReference type="GO" id="GO:0001530">
    <property type="term" value="F:lipopolysaccharide binding"/>
    <property type="evidence" value="ECO:0007669"/>
    <property type="project" value="TreeGrafter"/>
</dbReference>
<dbReference type="GO" id="GO:0061844">
    <property type="term" value="P:antimicrobial humoral immune response mediated by antimicrobial peptide"/>
    <property type="evidence" value="ECO:0007669"/>
    <property type="project" value="TreeGrafter"/>
</dbReference>
<dbReference type="GO" id="GO:0050829">
    <property type="term" value="P:defense response to Gram-negative bacterium"/>
    <property type="evidence" value="ECO:0007669"/>
    <property type="project" value="TreeGrafter"/>
</dbReference>
<dbReference type="GO" id="GO:0050830">
    <property type="term" value="P:defense response to Gram-positive bacterium"/>
    <property type="evidence" value="ECO:0007669"/>
    <property type="project" value="TreeGrafter"/>
</dbReference>
<dbReference type="GO" id="GO:0045087">
    <property type="term" value="P:innate immune response"/>
    <property type="evidence" value="ECO:0007669"/>
    <property type="project" value="UniProtKB-KW"/>
</dbReference>
<dbReference type="GO" id="GO:0042119">
    <property type="term" value="P:neutrophil activation"/>
    <property type="evidence" value="ECO:0000250"/>
    <property type="project" value="UniProtKB"/>
</dbReference>
<dbReference type="FunFam" id="3.10.450.10:FF:000003">
    <property type="entry name" value="Cathelicidin antimicrobial peptide"/>
    <property type="match status" value="1"/>
</dbReference>
<dbReference type="Gene3D" id="3.10.450.10">
    <property type="match status" value="1"/>
</dbReference>
<dbReference type="InterPro" id="IPR001894">
    <property type="entry name" value="Cathelicidin-like"/>
</dbReference>
<dbReference type="InterPro" id="IPR018216">
    <property type="entry name" value="Cathelicidin_CS"/>
</dbReference>
<dbReference type="InterPro" id="IPR022746">
    <property type="entry name" value="Cathlecidin_C"/>
</dbReference>
<dbReference type="InterPro" id="IPR046350">
    <property type="entry name" value="Cystatin_sf"/>
</dbReference>
<dbReference type="PANTHER" id="PTHR10206">
    <property type="entry name" value="CATHELICIDIN"/>
    <property type="match status" value="1"/>
</dbReference>
<dbReference type="PANTHER" id="PTHR10206:SF2">
    <property type="entry name" value="CATHELICIDIN ANTIMICROBIAL PEPTIDE"/>
    <property type="match status" value="1"/>
</dbReference>
<dbReference type="Pfam" id="PF12153">
    <property type="entry name" value="CAP18_C"/>
    <property type="match status" value="1"/>
</dbReference>
<dbReference type="Pfam" id="PF00666">
    <property type="entry name" value="Cathelicidins"/>
    <property type="match status" value="1"/>
</dbReference>
<dbReference type="SUPFAM" id="SSF54403">
    <property type="entry name" value="Cystatin/monellin"/>
    <property type="match status" value="1"/>
</dbReference>
<dbReference type="PROSITE" id="PS00946">
    <property type="entry name" value="CATHELICIDINS_1"/>
    <property type="match status" value="1"/>
</dbReference>
<dbReference type="PROSITE" id="PS00947">
    <property type="entry name" value="CATHELICIDINS_2"/>
    <property type="match status" value="1"/>
</dbReference>
<keyword id="KW-0044">Antibiotic</keyword>
<keyword id="KW-0929">Antimicrobial</keyword>
<keyword id="KW-0165">Cleavage on pair of basic residues</keyword>
<keyword id="KW-1015">Disulfide bond</keyword>
<keyword id="KW-0391">Immunity</keyword>
<keyword id="KW-0399">Innate immunity</keyword>
<keyword id="KW-0964">Secreted</keyword>
<keyword id="KW-0732">Signal</keyword>